<proteinExistence type="inferred from homology"/>
<gene>
    <name evidence="1" type="primary">rpsT</name>
    <name type="ordered locus">AZC_1015</name>
</gene>
<keyword id="KW-1185">Reference proteome</keyword>
<keyword id="KW-0687">Ribonucleoprotein</keyword>
<keyword id="KW-0689">Ribosomal protein</keyword>
<keyword id="KW-0694">RNA-binding</keyword>
<keyword id="KW-0699">rRNA-binding</keyword>
<feature type="chain" id="PRO_1000072434" description="Small ribosomal subunit protein bS20">
    <location>
        <begin position="1"/>
        <end position="88"/>
    </location>
</feature>
<feature type="region of interest" description="Disordered" evidence="2">
    <location>
        <begin position="1"/>
        <end position="25"/>
    </location>
</feature>
<protein>
    <recommendedName>
        <fullName evidence="1">Small ribosomal subunit protein bS20</fullName>
    </recommendedName>
    <alternativeName>
        <fullName evidence="3">30S ribosomal protein S20</fullName>
    </alternativeName>
</protein>
<comment type="function">
    <text evidence="1">Binds directly to 16S ribosomal RNA.</text>
</comment>
<comment type="similarity">
    <text evidence="1">Belongs to the bacterial ribosomal protein bS20 family.</text>
</comment>
<evidence type="ECO:0000255" key="1">
    <source>
        <dbReference type="HAMAP-Rule" id="MF_00500"/>
    </source>
</evidence>
<evidence type="ECO:0000256" key="2">
    <source>
        <dbReference type="SAM" id="MobiDB-lite"/>
    </source>
</evidence>
<evidence type="ECO:0000305" key="3"/>
<name>RS20_AZOC5</name>
<accession>A8HQ27</accession>
<dbReference type="EMBL" id="AP009384">
    <property type="protein sequence ID" value="BAF87013.1"/>
    <property type="molecule type" value="Genomic_DNA"/>
</dbReference>
<dbReference type="RefSeq" id="WP_012169546.1">
    <property type="nucleotide sequence ID" value="NC_009937.1"/>
</dbReference>
<dbReference type="SMR" id="A8HQ27"/>
<dbReference type="STRING" id="438753.AZC_1015"/>
<dbReference type="KEGG" id="azc:AZC_1015"/>
<dbReference type="eggNOG" id="COG0268">
    <property type="taxonomic scope" value="Bacteria"/>
</dbReference>
<dbReference type="HOGENOM" id="CLU_160655_3_0_5"/>
<dbReference type="Proteomes" id="UP000000270">
    <property type="component" value="Chromosome"/>
</dbReference>
<dbReference type="GO" id="GO:0005829">
    <property type="term" value="C:cytosol"/>
    <property type="evidence" value="ECO:0007669"/>
    <property type="project" value="TreeGrafter"/>
</dbReference>
<dbReference type="GO" id="GO:0015935">
    <property type="term" value="C:small ribosomal subunit"/>
    <property type="evidence" value="ECO:0007669"/>
    <property type="project" value="TreeGrafter"/>
</dbReference>
<dbReference type="GO" id="GO:0070181">
    <property type="term" value="F:small ribosomal subunit rRNA binding"/>
    <property type="evidence" value="ECO:0007669"/>
    <property type="project" value="TreeGrafter"/>
</dbReference>
<dbReference type="GO" id="GO:0003735">
    <property type="term" value="F:structural constituent of ribosome"/>
    <property type="evidence" value="ECO:0007669"/>
    <property type="project" value="InterPro"/>
</dbReference>
<dbReference type="GO" id="GO:0006412">
    <property type="term" value="P:translation"/>
    <property type="evidence" value="ECO:0007669"/>
    <property type="project" value="UniProtKB-UniRule"/>
</dbReference>
<dbReference type="FunFam" id="1.20.58.110:FF:000001">
    <property type="entry name" value="30S ribosomal protein S20"/>
    <property type="match status" value="1"/>
</dbReference>
<dbReference type="Gene3D" id="1.20.58.110">
    <property type="entry name" value="Ribosomal protein S20"/>
    <property type="match status" value="1"/>
</dbReference>
<dbReference type="HAMAP" id="MF_00500">
    <property type="entry name" value="Ribosomal_bS20"/>
    <property type="match status" value="1"/>
</dbReference>
<dbReference type="InterPro" id="IPR002583">
    <property type="entry name" value="Ribosomal_bS20"/>
</dbReference>
<dbReference type="InterPro" id="IPR036510">
    <property type="entry name" value="Ribosomal_bS20_sf"/>
</dbReference>
<dbReference type="NCBIfam" id="TIGR00029">
    <property type="entry name" value="S20"/>
    <property type="match status" value="1"/>
</dbReference>
<dbReference type="PANTHER" id="PTHR33398">
    <property type="entry name" value="30S RIBOSOMAL PROTEIN S20"/>
    <property type="match status" value="1"/>
</dbReference>
<dbReference type="PANTHER" id="PTHR33398:SF1">
    <property type="entry name" value="SMALL RIBOSOMAL SUBUNIT PROTEIN BS20C"/>
    <property type="match status" value="1"/>
</dbReference>
<dbReference type="Pfam" id="PF01649">
    <property type="entry name" value="Ribosomal_S20p"/>
    <property type="match status" value="1"/>
</dbReference>
<dbReference type="SUPFAM" id="SSF46992">
    <property type="entry name" value="Ribosomal protein S20"/>
    <property type="match status" value="1"/>
</dbReference>
<reference key="1">
    <citation type="submission" date="2007-04" db="EMBL/GenBank/DDBJ databases">
        <title>Complete genome sequence of the nitrogen-fixing bacterium Azorhizobium caulinodans ORS571.</title>
        <authorList>
            <person name="Lee K.B."/>
            <person name="Backer P.D."/>
            <person name="Aono T."/>
            <person name="Liu C.T."/>
            <person name="Suzuki S."/>
            <person name="Suzuki T."/>
            <person name="Kaneko T."/>
            <person name="Yamada M."/>
            <person name="Tabata S."/>
            <person name="Kupfer D.M."/>
            <person name="Najar F.Z."/>
            <person name="Wiley G.B."/>
            <person name="Roe B."/>
            <person name="Binnewies T."/>
            <person name="Ussery D."/>
            <person name="Vereecke D."/>
            <person name="Gevers D."/>
            <person name="Holsters M."/>
            <person name="Oyaizu H."/>
        </authorList>
    </citation>
    <scope>NUCLEOTIDE SEQUENCE [LARGE SCALE GENOMIC DNA]</scope>
    <source>
        <strain>ATCC 43989 / DSM 5975 / JCM 20966 / LMG 6465 / NBRC 14845 / NCIMB 13405 / ORS 571</strain>
    </source>
</reference>
<organism>
    <name type="scientific">Azorhizobium caulinodans (strain ATCC 43989 / DSM 5975 / JCM 20966 / LMG 6465 / NBRC 14845 / NCIMB 13405 / ORS 571)</name>
    <dbReference type="NCBI Taxonomy" id="438753"/>
    <lineage>
        <taxon>Bacteria</taxon>
        <taxon>Pseudomonadati</taxon>
        <taxon>Pseudomonadota</taxon>
        <taxon>Alphaproteobacteria</taxon>
        <taxon>Hyphomicrobiales</taxon>
        <taxon>Xanthobacteraceae</taxon>
        <taxon>Azorhizobium</taxon>
    </lineage>
</organism>
<sequence length="88" mass="9699">MANTPSAKKAARKIERRTAVNRARRSRVRTYLRKLEDALTAGNKDAAVAAFKAAEPEIMRAVTKGVLHKNTASRKVSRLAARVRKISA</sequence>